<name>RIMM_ECOL5</name>
<proteinExistence type="inferred from homology"/>
<comment type="function">
    <text evidence="1">An accessory protein needed during the final step in the assembly of 30S ribosomal subunit, possibly for assembly of the head region. Essential for efficient processing of 16S rRNA. May be needed both before and after RbfA during the maturation of 16S rRNA. It has affinity for free ribosomal 30S subunits but not for 70S ribosomes.</text>
</comment>
<comment type="subunit">
    <text evidence="1">Binds ribosomal protein uS19.</text>
</comment>
<comment type="subcellular location">
    <subcellularLocation>
        <location evidence="1">Cytoplasm</location>
    </subcellularLocation>
</comment>
<comment type="domain">
    <text evidence="1">The PRC barrel domain binds ribosomal protein uS19.</text>
</comment>
<comment type="similarity">
    <text evidence="1">Belongs to the RimM family.</text>
</comment>
<organism>
    <name type="scientific">Escherichia coli O6:K15:H31 (strain 536 / UPEC)</name>
    <dbReference type="NCBI Taxonomy" id="362663"/>
    <lineage>
        <taxon>Bacteria</taxon>
        <taxon>Pseudomonadati</taxon>
        <taxon>Pseudomonadota</taxon>
        <taxon>Gammaproteobacteria</taxon>
        <taxon>Enterobacterales</taxon>
        <taxon>Enterobacteriaceae</taxon>
        <taxon>Escherichia</taxon>
    </lineage>
</organism>
<sequence>MSKQLTAQAPVDPIVLGKMGSSYGIRGWLRVFSSTEDAESIFDYQPWFIQKAGQWQQVQLESWKHHNQDMIIKLKGVDDRDAANLLTNCEIVVDSSQLPQLEEGDYYWKDLMGCQVVTTEGYDLGKVVDMMETGSNDVLVIKANLKDAFGIKERLVPFLDGQVIKKVDLTTRSIEVDWDPGF</sequence>
<feature type="chain" id="PRO_1000001169" description="Ribosome maturation factor RimM">
    <location>
        <begin position="1"/>
        <end position="182"/>
    </location>
</feature>
<feature type="domain" description="PRC barrel" evidence="1">
    <location>
        <begin position="103"/>
        <end position="182"/>
    </location>
</feature>
<keyword id="KW-0143">Chaperone</keyword>
<keyword id="KW-0963">Cytoplasm</keyword>
<keyword id="KW-0690">Ribosome biogenesis</keyword>
<keyword id="KW-0698">rRNA processing</keyword>
<accession>Q0TEN1</accession>
<reference key="1">
    <citation type="journal article" date="2006" name="Mol. Microbiol.">
        <title>Role of pathogenicity island-associated integrases in the genome plasticity of uropathogenic Escherichia coli strain 536.</title>
        <authorList>
            <person name="Hochhut B."/>
            <person name="Wilde C."/>
            <person name="Balling G."/>
            <person name="Middendorf B."/>
            <person name="Dobrindt U."/>
            <person name="Brzuszkiewicz E."/>
            <person name="Gottschalk G."/>
            <person name="Carniel E."/>
            <person name="Hacker J."/>
        </authorList>
    </citation>
    <scope>NUCLEOTIDE SEQUENCE [LARGE SCALE GENOMIC DNA]</scope>
    <source>
        <strain>536 / UPEC</strain>
    </source>
</reference>
<protein>
    <recommendedName>
        <fullName evidence="1">Ribosome maturation factor RimM</fullName>
    </recommendedName>
</protein>
<dbReference type="EMBL" id="CP000247">
    <property type="protein sequence ID" value="ABG70598.1"/>
    <property type="molecule type" value="Genomic_DNA"/>
</dbReference>
<dbReference type="RefSeq" id="WP_000043335.1">
    <property type="nucleotide sequence ID" value="NC_008253.1"/>
</dbReference>
<dbReference type="SMR" id="Q0TEN1"/>
<dbReference type="GeneID" id="93774458"/>
<dbReference type="KEGG" id="ecp:ECP_2609"/>
<dbReference type="HOGENOM" id="CLU_077636_1_0_6"/>
<dbReference type="Proteomes" id="UP000009182">
    <property type="component" value="Chromosome"/>
</dbReference>
<dbReference type="GO" id="GO:0005737">
    <property type="term" value="C:cytoplasm"/>
    <property type="evidence" value="ECO:0007669"/>
    <property type="project" value="UniProtKB-SubCell"/>
</dbReference>
<dbReference type="GO" id="GO:0005840">
    <property type="term" value="C:ribosome"/>
    <property type="evidence" value="ECO:0007669"/>
    <property type="project" value="InterPro"/>
</dbReference>
<dbReference type="GO" id="GO:0043022">
    <property type="term" value="F:ribosome binding"/>
    <property type="evidence" value="ECO:0007669"/>
    <property type="project" value="InterPro"/>
</dbReference>
<dbReference type="GO" id="GO:0042274">
    <property type="term" value="P:ribosomal small subunit biogenesis"/>
    <property type="evidence" value="ECO:0007669"/>
    <property type="project" value="UniProtKB-UniRule"/>
</dbReference>
<dbReference type="GO" id="GO:0006364">
    <property type="term" value="P:rRNA processing"/>
    <property type="evidence" value="ECO:0007669"/>
    <property type="project" value="UniProtKB-UniRule"/>
</dbReference>
<dbReference type="FunFam" id="2.30.30.240:FF:000001">
    <property type="entry name" value="Ribosome maturation factor RimM"/>
    <property type="match status" value="1"/>
</dbReference>
<dbReference type="FunFam" id="2.40.30.60:FF:000001">
    <property type="entry name" value="Ribosome maturation factor RimM"/>
    <property type="match status" value="1"/>
</dbReference>
<dbReference type="Gene3D" id="2.30.30.240">
    <property type="entry name" value="PRC-barrel domain"/>
    <property type="match status" value="1"/>
</dbReference>
<dbReference type="Gene3D" id="2.40.30.60">
    <property type="entry name" value="RimM"/>
    <property type="match status" value="1"/>
</dbReference>
<dbReference type="HAMAP" id="MF_00014">
    <property type="entry name" value="Ribosome_mat_RimM"/>
    <property type="match status" value="1"/>
</dbReference>
<dbReference type="InterPro" id="IPR011033">
    <property type="entry name" value="PRC_barrel-like_sf"/>
</dbReference>
<dbReference type="InterPro" id="IPR056792">
    <property type="entry name" value="PRC_RimM"/>
</dbReference>
<dbReference type="InterPro" id="IPR011961">
    <property type="entry name" value="RimM"/>
</dbReference>
<dbReference type="InterPro" id="IPR002676">
    <property type="entry name" value="RimM_N"/>
</dbReference>
<dbReference type="InterPro" id="IPR036976">
    <property type="entry name" value="RimM_N_sf"/>
</dbReference>
<dbReference type="InterPro" id="IPR009000">
    <property type="entry name" value="Transl_B-barrel_sf"/>
</dbReference>
<dbReference type="NCBIfam" id="TIGR02273">
    <property type="entry name" value="16S_RimM"/>
    <property type="match status" value="1"/>
</dbReference>
<dbReference type="PANTHER" id="PTHR33692">
    <property type="entry name" value="RIBOSOME MATURATION FACTOR RIMM"/>
    <property type="match status" value="1"/>
</dbReference>
<dbReference type="PANTHER" id="PTHR33692:SF1">
    <property type="entry name" value="RIBOSOME MATURATION FACTOR RIMM"/>
    <property type="match status" value="1"/>
</dbReference>
<dbReference type="Pfam" id="PF24986">
    <property type="entry name" value="PRC_RimM"/>
    <property type="match status" value="1"/>
</dbReference>
<dbReference type="Pfam" id="PF01782">
    <property type="entry name" value="RimM"/>
    <property type="match status" value="1"/>
</dbReference>
<dbReference type="SUPFAM" id="SSF50346">
    <property type="entry name" value="PRC-barrel domain"/>
    <property type="match status" value="1"/>
</dbReference>
<dbReference type="SUPFAM" id="SSF50447">
    <property type="entry name" value="Translation proteins"/>
    <property type="match status" value="1"/>
</dbReference>
<evidence type="ECO:0000255" key="1">
    <source>
        <dbReference type="HAMAP-Rule" id="MF_00014"/>
    </source>
</evidence>
<gene>
    <name evidence="1" type="primary">rimM</name>
    <name type="ordered locus">ECP_2609</name>
</gene>